<dbReference type="EC" id="2.3.3.13" evidence="1"/>
<dbReference type="EMBL" id="CP001407">
    <property type="protein sequence ID" value="ACO26710.1"/>
    <property type="molecule type" value="Genomic_DNA"/>
</dbReference>
<dbReference type="RefSeq" id="WP_000809590.1">
    <property type="nucleotide sequence ID" value="NZ_CP009318.1"/>
</dbReference>
<dbReference type="SMR" id="C1EMA9"/>
<dbReference type="KEGG" id="bcx:BCA_1455"/>
<dbReference type="PATRIC" id="fig|572264.18.peg.1405"/>
<dbReference type="UniPathway" id="UPA00048">
    <property type="reaction ID" value="UER00070"/>
</dbReference>
<dbReference type="Proteomes" id="UP000002210">
    <property type="component" value="Chromosome"/>
</dbReference>
<dbReference type="GO" id="GO:0005737">
    <property type="term" value="C:cytoplasm"/>
    <property type="evidence" value="ECO:0007669"/>
    <property type="project" value="UniProtKB-SubCell"/>
</dbReference>
<dbReference type="GO" id="GO:0003852">
    <property type="term" value="F:2-isopropylmalate synthase activity"/>
    <property type="evidence" value="ECO:0007669"/>
    <property type="project" value="UniProtKB-UniRule"/>
</dbReference>
<dbReference type="GO" id="GO:0003985">
    <property type="term" value="F:acetyl-CoA C-acetyltransferase activity"/>
    <property type="evidence" value="ECO:0007669"/>
    <property type="project" value="UniProtKB-UniRule"/>
</dbReference>
<dbReference type="GO" id="GO:0030145">
    <property type="term" value="F:manganese ion binding"/>
    <property type="evidence" value="ECO:0007669"/>
    <property type="project" value="UniProtKB-UniRule"/>
</dbReference>
<dbReference type="GO" id="GO:0009098">
    <property type="term" value="P:L-leucine biosynthetic process"/>
    <property type="evidence" value="ECO:0007669"/>
    <property type="project" value="UniProtKB-UniRule"/>
</dbReference>
<dbReference type="CDD" id="cd07940">
    <property type="entry name" value="DRE_TIM_IPMS"/>
    <property type="match status" value="1"/>
</dbReference>
<dbReference type="FunFam" id="1.10.238.260:FF:000001">
    <property type="entry name" value="2-isopropylmalate synthase"/>
    <property type="match status" value="1"/>
</dbReference>
<dbReference type="FunFam" id="3.20.20.70:FF:000287">
    <property type="entry name" value="2-isopropylmalate synthase"/>
    <property type="match status" value="1"/>
</dbReference>
<dbReference type="FunFam" id="3.30.160.270:FF:000003">
    <property type="entry name" value="2-isopropylmalate synthase"/>
    <property type="match status" value="1"/>
</dbReference>
<dbReference type="Gene3D" id="1.10.238.260">
    <property type="match status" value="1"/>
</dbReference>
<dbReference type="Gene3D" id="3.30.160.270">
    <property type="match status" value="1"/>
</dbReference>
<dbReference type="Gene3D" id="3.20.20.70">
    <property type="entry name" value="Aldolase class I"/>
    <property type="match status" value="1"/>
</dbReference>
<dbReference type="HAMAP" id="MF_01025">
    <property type="entry name" value="LeuA_type1"/>
    <property type="match status" value="1"/>
</dbReference>
<dbReference type="InterPro" id="IPR050073">
    <property type="entry name" value="2-IPM_HCS-like"/>
</dbReference>
<dbReference type="InterPro" id="IPR013709">
    <property type="entry name" value="2-isopropylmalate_synth_dimer"/>
</dbReference>
<dbReference type="InterPro" id="IPR002034">
    <property type="entry name" value="AIPM/Hcit_synth_CS"/>
</dbReference>
<dbReference type="InterPro" id="IPR013785">
    <property type="entry name" value="Aldolase_TIM"/>
</dbReference>
<dbReference type="InterPro" id="IPR054691">
    <property type="entry name" value="LeuA/HCS_post-cat"/>
</dbReference>
<dbReference type="InterPro" id="IPR036230">
    <property type="entry name" value="LeuA_allosteric_dom_sf"/>
</dbReference>
<dbReference type="InterPro" id="IPR005671">
    <property type="entry name" value="LeuA_bact_synth"/>
</dbReference>
<dbReference type="InterPro" id="IPR000891">
    <property type="entry name" value="PYR_CT"/>
</dbReference>
<dbReference type="NCBIfam" id="TIGR00973">
    <property type="entry name" value="leuA_bact"/>
    <property type="match status" value="1"/>
</dbReference>
<dbReference type="NCBIfam" id="NF002086">
    <property type="entry name" value="PRK00915.1-3"/>
    <property type="match status" value="1"/>
</dbReference>
<dbReference type="NCBIfam" id="NF002088">
    <property type="entry name" value="PRK00915.1-5"/>
    <property type="match status" value="1"/>
</dbReference>
<dbReference type="PANTHER" id="PTHR10277:SF9">
    <property type="entry name" value="2-ISOPROPYLMALATE SYNTHASE 1, CHLOROPLASTIC-RELATED"/>
    <property type="match status" value="1"/>
</dbReference>
<dbReference type="PANTHER" id="PTHR10277">
    <property type="entry name" value="HOMOCITRATE SYNTHASE-RELATED"/>
    <property type="match status" value="1"/>
</dbReference>
<dbReference type="Pfam" id="PF22617">
    <property type="entry name" value="HCS_D2"/>
    <property type="match status" value="1"/>
</dbReference>
<dbReference type="Pfam" id="PF00682">
    <property type="entry name" value="HMGL-like"/>
    <property type="match status" value="1"/>
</dbReference>
<dbReference type="Pfam" id="PF08502">
    <property type="entry name" value="LeuA_dimer"/>
    <property type="match status" value="1"/>
</dbReference>
<dbReference type="SMART" id="SM00917">
    <property type="entry name" value="LeuA_dimer"/>
    <property type="match status" value="1"/>
</dbReference>
<dbReference type="SUPFAM" id="SSF110921">
    <property type="entry name" value="2-isopropylmalate synthase LeuA, allosteric (dimerisation) domain"/>
    <property type="match status" value="1"/>
</dbReference>
<dbReference type="SUPFAM" id="SSF51569">
    <property type="entry name" value="Aldolase"/>
    <property type="match status" value="1"/>
</dbReference>
<dbReference type="PROSITE" id="PS00815">
    <property type="entry name" value="AIPM_HOMOCIT_SYNTH_1"/>
    <property type="match status" value="1"/>
</dbReference>
<dbReference type="PROSITE" id="PS00816">
    <property type="entry name" value="AIPM_HOMOCIT_SYNTH_2"/>
    <property type="match status" value="1"/>
</dbReference>
<dbReference type="PROSITE" id="PS50991">
    <property type="entry name" value="PYR_CT"/>
    <property type="match status" value="1"/>
</dbReference>
<sequence length="506" mass="55401">MKQILFMDTTLRDGEQSPGVNLNEQEKLQIARQLERLGIHVMEAGFAAASEGDFQSVKRIANTIQNATVMSLARAKESDIRRAYEAVKGAVSPRLHVFLATSDIHMKYKLCMSKEDVLDSIYRSVTLGKSLFPTVQFSAEDATRTARDFLAEAVEVAIRAGANVINIPDTVGYTNPEEYYSLFKYLQESVPSYEKAIFSCHCHDDLGMAVANSLAAVEGGALQVEGTINGIGERAGNAALEEVAVALHIRKDFYKAEPSMTLKEIKATSTLVSRLTGMVVPKNKAIVGANAFAHESGIHQDGVLKEVTTYEIIEPALVGESQNLFVLGKHSGRHAFTEKMKELGYEFTNDERDAVFEAFKKLADRKKEITEEDLRALMLGEAAFAAQQYNITQLQVHFVSNSTQCATVVLKDEEGNVFEDAATGSGSIEAIYNAIQRILGLECELADYRIQSITQGQDALAHVHVELKEGAHQVSGFGVAQDVLEASARAYVHAAGKLKSFIQLVK</sequence>
<evidence type="ECO:0000255" key="1">
    <source>
        <dbReference type="HAMAP-Rule" id="MF_01025"/>
    </source>
</evidence>
<name>LEU1_BACC3</name>
<gene>
    <name evidence="1" type="primary">leuA</name>
    <name type="ordered locus">BCA_1455</name>
</gene>
<keyword id="KW-0028">Amino-acid biosynthesis</keyword>
<keyword id="KW-0100">Branched-chain amino acid biosynthesis</keyword>
<keyword id="KW-0963">Cytoplasm</keyword>
<keyword id="KW-0432">Leucine biosynthesis</keyword>
<keyword id="KW-0464">Manganese</keyword>
<keyword id="KW-0479">Metal-binding</keyword>
<keyword id="KW-0808">Transferase</keyword>
<accession>C1EMA9</accession>
<proteinExistence type="inferred from homology"/>
<feature type="chain" id="PRO_1000149131" description="2-isopropylmalate synthase">
    <location>
        <begin position="1"/>
        <end position="506"/>
    </location>
</feature>
<feature type="domain" description="Pyruvate carboxyltransferase" evidence="1">
    <location>
        <begin position="4"/>
        <end position="266"/>
    </location>
</feature>
<feature type="region of interest" description="Regulatory domain" evidence="1">
    <location>
        <begin position="390"/>
        <end position="506"/>
    </location>
</feature>
<feature type="binding site" evidence="1">
    <location>
        <position position="13"/>
    </location>
    <ligand>
        <name>Mn(2+)</name>
        <dbReference type="ChEBI" id="CHEBI:29035"/>
    </ligand>
</feature>
<feature type="binding site" evidence="1">
    <location>
        <position position="201"/>
    </location>
    <ligand>
        <name>Mn(2+)</name>
        <dbReference type="ChEBI" id="CHEBI:29035"/>
    </ligand>
</feature>
<feature type="binding site" evidence="1">
    <location>
        <position position="203"/>
    </location>
    <ligand>
        <name>Mn(2+)</name>
        <dbReference type="ChEBI" id="CHEBI:29035"/>
    </ligand>
</feature>
<feature type="binding site" evidence="1">
    <location>
        <position position="237"/>
    </location>
    <ligand>
        <name>Mn(2+)</name>
        <dbReference type="ChEBI" id="CHEBI:29035"/>
    </ligand>
</feature>
<comment type="function">
    <text evidence="1">Catalyzes the condensation of the acetyl group of acetyl-CoA with 3-methyl-2-oxobutanoate (2-ketoisovalerate) to form 3-carboxy-3-hydroxy-4-methylpentanoate (2-isopropylmalate).</text>
</comment>
<comment type="catalytic activity">
    <reaction evidence="1">
        <text>3-methyl-2-oxobutanoate + acetyl-CoA + H2O = (2S)-2-isopropylmalate + CoA + H(+)</text>
        <dbReference type="Rhea" id="RHEA:21524"/>
        <dbReference type="ChEBI" id="CHEBI:1178"/>
        <dbReference type="ChEBI" id="CHEBI:11851"/>
        <dbReference type="ChEBI" id="CHEBI:15377"/>
        <dbReference type="ChEBI" id="CHEBI:15378"/>
        <dbReference type="ChEBI" id="CHEBI:57287"/>
        <dbReference type="ChEBI" id="CHEBI:57288"/>
        <dbReference type="EC" id="2.3.3.13"/>
    </reaction>
</comment>
<comment type="cofactor">
    <cofactor evidence="1">
        <name>Mn(2+)</name>
        <dbReference type="ChEBI" id="CHEBI:29035"/>
    </cofactor>
</comment>
<comment type="pathway">
    <text evidence="1">Amino-acid biosynthesis; L-leucine biosynthesis; L-leucine from 3-methyl-2-oxobutanoate: step 1/4.</text>
</comment>
<comment type="subunit">
    <text evidence="1">Homodimer.</text>
</comment>
<comment type="subcellular location">
    <subcellularLocation>
        <location evidence="1">Cytoplasm</location>
    </subcellularLocation>
</comment>
<comment type="similarity">
    <text evidence="1">Belongs to the alpha-IPM synthase/homocitrate synthase family. LeuA type 1 subfamily.</text>
</comment>
<reference key="1">
    <citation type="submission" date="2009-02" db="EMBL/GenBank/DDBJ databases">
        <title>Genome sequence of Bacillus cereus 03BB102.</title>
        <authorList>
            <person name="Dodson R.J."/>
            <person name="Jackson P."/>
            <person name="Munk A.C."/>
            <person name="Brettin T."/>
            <person name="Bruce D."/>
            <person name="Detter C."/>
            <person name="Tapia R."/>
            <person name="Han C."/>
            <person name="Sutton G."/>
            <person name="Sims D."/>
        </authorList>
    </citation>
    <scope>NUCLEOTIDE SEQUENCE [LARGE SCALE GENOMIC DNA]</scope>
    <source>
        <strain>03BB102</strain>
    </source>
</reference>
<organism>
    <name type="scientific">Bacillus cereus (strain 03BB102)</name>
    <dbReference type="NCBI Taxonomy" id="572264"/>
    <lineage>
        <taxon>Bacteria</taxon>
        <taxon>Bacillati</taxon>
        <taxon>Bacillota</taxon>
        <taxon>Bacilli</taxon>
        <taxon>Bacillales</taxon>
        <taxon>Bacillaceae</taxon>
        <taxon>Bacillus</taxon>
        <taxon>Bacillus cereus group</taxon>
    </lineage>
</organism>
<protein>
    <recommendedName>
        <fullName evidence="1">2-isopropylmalate synthase</fullName>
        <ecNumber evidence="1">2.3.3.13</ecNumber>
    </recommendedName>
    <alternativeName>
        <fullName evidence="1">Alpha-IPM synthase</fullName>
    </alternativeName>
    <alternativeName>
        <fullName evidence="1">Alpha-isopropylmalate synthase</fullName>
    </alternativeName>
</protein>